<sequence>MNLSNHFLVAMPDMEDAFFSQSVVYICKHDEDGALGIAINKPSPITMDMIFSATGKNIPMRMQHDSVMMGGPVQVERGYVVHTPIGNWQSSIGVSDGIALTSSRDVLENISREGAVDKALISIGYSSWSKGQLERELADNAWLTVPADEHILFDIPYEHRYAAAFAKLGIDPLALFSGAGHA</sequence>
<comment type="similarity">
    <text evidence="1">Belongs to the UPF0301 (AlgH) family.</text>
</comment>
<feature type="chain" id="PRO_0000258844" description="UPF0301 protein NGO_0569">
    <location>
        <begin position="1"/>
        <end position="182"/>
    </location>
</feature>
<reference key="1">
    <citation type="submission" date="2003-03" db="EMBL/GenBank/DDBJ databases">
        <title>The complete genome sequence of Neisseria gonorrhoeae.</title>
        <authorList>
            <person name="Lewis L.A."/>
            <person name="Gillaspy A.F."/>
            <person name="McLaughlin R.E."/>
            <person name="Gipson M."/>
            <person name="Ducey T.F."/>
            <person name="Ownbey T."/>
            <person name="Hartman K."/>
            <person name="Nydick C."/>
            <person name="Carson M.B."/>
            <person name="Vaughn J."/>
            <person name="Thomson C."/>
            <person name="Song L."/>
            <person name="Lin S."/>
            <person name="Yuan X."/>
            <person name="Najar F."/>
            <person name="Zhan M."/>
            <person name="Ren Q."/>
            <person name="Zhu H."/>
            <person name="Qi S."/>
            <person name="Kenton S.M."/>
            <person name="Lai H."/>
            <person name="White J.D."/>
            <person name="Clifton S."/>
            <person name="Roe B.A."/>
            <person name="Dyer D.W."/>
        </authorList>
    </citation>
    <scope>NUCLEOTIDE SEQUENCE [LARGE SCALE GENOMIC DNA]</scope>
    <source>
        <strain>ATCC 700825 / FA 1090</strain>
    </source>
</reference>
<evidence type="ECO:0000255" key="1">
    <source>
        <dbReference type="HAMAP-Rule" id="MF_00758"/>
    </source>
</evidence>
<dbReference type="EMBL" id="AE004969">
    <property type="protein sequence ID" value="AAW89302.1"/>
    <property type="molecule type" value="Genomic_DNA"/>
</dbReference>
<dbReference type="RefSeq" id="WP_003688988.1">
    <property type="nucleotide sequence ID" value="NC_002946.2"/>
</dbReference>
<dbReference type="RefSeq" id="YP_207714.1">
    <property type="nucleotide sequence ID" value="NC_002946.2"/>
</dbReference>
<dbReference type="SMR" id="Q5F935"/>
<dbReference type="STRING" id="242231.NGO_0569"/>
<dbReference type="KEGG" id="ngo:NGO_0569"/>
<dbReference type="PATRIC" id="fig|242231.10.peg.672"/>
<dbReference type="HOGENOM" id="CLU_057596_1_0_4"/>
<dbReference type="Proteomes" id="UP000000535">
    <property type="component" value="Chromosome"/>
</dbReference>
<dbReference type="GO" id="GO:0005829">
    <property type="term" value="C:cytosol"/>
    <property type="evidence" value="ECO:0007669"/>
    <property type="project" value="TreeGrafter"/>
</dbReference>
<dbReference type="Gene3D" id="3.40.1740.10">
    <property type="entry name" value="VC0467-like"/>
    <property type="match status" value="1"/>
</dbReference>
<dbReference type="HAMAP" id="MF_00758">
    <property type="entry name" value="UPF0301"/>
    <property type="match status" value="1"/>
</dbReference>
<dbReference type="InterPro" id="IPR003774">
    <property type="entry name" value="AlgH-like"/>
</dbReference>
<dbReference type="NCBIfam" id="NF001266">
    <property type="entry name" value="PRK00228.1-1"/>
    <property type="match status" value="1"/>
</dbReference>
<dbReference type="PANTHER" id="PTHR30327">
    <property type="entry name" value="UNCHARACTERIZED PROTEIN YQGE"/>
    <property type="match status" value="1"/>
</dbReference>
<dbReference type="PANTHER" id="PTHR30327:SF1">
    <property type="entry name" value="UPF0301 PROTEIN YQGE"/>
    <property type="match status" value="1"/>
</dbReference>
<dbReference type="Pfam" id="PF02622">
    <property type="entry name" value="DUF179"/>
    <property type="match status" value="1"/>
</dbReference>
<dbReference type="SUPFAM" id="SSF143456">
    <property type="entry name" value="VC0467-like"/>
    <property type="match status" value="1"/>
</dbReference>
<protein>
    <recommendedName>
        <fullName evidence="1">UPF0301 protein NGO_0569</fullName>
    </recommendedName>
</protein>
<proteinExistence type="inferred from homology"/>
<name>Y569_NEIG1</name>
<organism>
    <name type="scientific">Neisseria gonorrhoeae (strain ATCC 700825 / FA 1090)</name>
    <dbReference type="NCBI Taxonomy" id="242231"/>
    <lineage>
        <taxon>Bacteria</taxon>
        <taxon>Pseudomonadati</taxon>
        <taxon>Pseudomonadota</taxon>
        <taxon>Betaproteobacteria</taxon>
        <taxon>Neisseriales</taxon>
        <taxon>Neisseriaceae</taxon>
        <taxon>Neisseria</taxon>
    </lineage>
</organism>
<accession>Q5F935</accession>
<gene>
    <name type="ordered locus">NGO_0569</name>
</gene>
<keyword id="KW-1185">Reference proteome</keyword>